<reference key="1">
    <citation type="journal article" date="2003" name="Nature">
        <title>Genome divergence in two Prochlorococcus ecotypes reflects oceanic niche differentiation.</title>
        <authorList>
            <person name="Rocap G."/>
            <person name="Larimer F.W."/>
            <person name="Lamerdin J.E."/>
            <person name="Malfatti S."/>
            <person name="Chain P."/>
            <person name="Ahlgren N.A."/>
            <person name="Arellano A."/>
            <person name="Coleman M."/>
            <person name="Hauser L."/>
            <person name="Hess W.R."/>
            <person name="Johnson Z.I."/>
            <person name="Land M.L."/>
            <person name="Lindell D."/>
            <person name="Post A.F."/>
            <person name="Regala W."/>
            <person name="Shah M."/>
            <person name="Shaw S.L."/>
            <person name="Steglich C."/>
            <person name="Sullivan M.B."/>
            <person name="Ting C.S."/>
            <person name="Tolonen A."/>
            <person name="Webb E.A."/>
            <person name="Zinser E.R."/>
            <person name="Chisholm S.W."/>
        </authorList>
    </citation>
    <scope>NUCLEOTIDE SEQUENCE [LARGE SCALE GENOMIC DNA]</scope>
    <source>
        <strain>MIT 9313</strain>
    </source>
</reference>
<name>NDHO_PROMM</name>
<organism>
    <name type="scientific">Prochlorococcus marinus (strain MIT 9313)</name>
    <dbReference type="NCBI Taxonomy" id="74547"/>
    <lineage>
        <taxon>Bacteria</taxon>
        <taxon>Bacillati</taxon>
        <taxon>Cyanobacteriota</taxon>
        <taxon>Cyanophyceae</taxon>
        <taxon>Synechococcales</taxon>
        <taxon>Prochlorococcaceae</taxon>
        <taxon>Prochlorococcus</taxon>
    </lineage>
</organism>
<dbReference type="EC" id="7.1.1.-" evidence="1"/>
<dbReference type="EMBL" id="BX548175">
    <property type="protein sequence ID" value="CAE22149.1"/>
    <property type="molecule type" value="Genomic_DNA"/>
</dbReference>
<dbReference type="RefSeq" id="WP_011131340.1">
    <property type="nucleotide sequence ID" value="NC_005071.1"/>
</dbReference>
<dbReference type="SMR" id="Q7V4H6"/>
<dbReference type="KEGG" id="pmt:PMT_1975"/>
<dbReference type="eggNOG" id="ENOG50345U2">
    <property type="taxonomic scope" value="Bacteria"/>
</dbReference>
<dbReference type="HOGENOM" id="CLU_195299_0_0_3"/>
<dbReference type="OrthoDB" id="426633at2"/>
<dbReference type="Proteomes" id="UP000001423">
    <property type="component" value="Chromosome"/>
</dbReference>
<dbReference type="GO" id="GO:0031676">
    <property type="term" value="C:plasma membrane-derived thylakoid membrane"/>
    <property type="evidence" value="ECO:0007669"/>
    <property type="project" value="UniProtKB-SubCell"/>
</dbReference>
<dbReference type="GO" id="GO:0016655">
    <property type="term" value="F:oxidoreductase activity, acting on NAD(P)H, quinone or similar compound as acceptor"/>
    <property type="evidence" value="ECO:0007669"/>
    <property type="project" value="UniProtKB-UniRule"/>
</dbReference>
<dbReference type="GO" id="GO:0048038">
    <property type="term" value="F:quinone binding"/>
    <property type="evidence" value="ECO:0007669"/>
    <property type="project" value="UniProtKB-KW"/>
</dbReference>
<dbReference type="HAMAP" id="MF_01354">
    <property type="entry name" value="NDH1_NDH1O"/>
    <property type="match status" value="1"/>
</dbReference>
<dbReference type="InterPro" id="IPR020905">
    <property type="entry name" value="NdhO"/>
</dbReference>
<dbReference type="Pfam" id="PF11910">
    <property type="entry name" value="NdhO"/>
    <property type="match status" value="1"/>
</dbReference>
<accession>Q7V4H6</accession>
<feature type="chain" id="PRO_0000353645" description="NAD(P)H-quinone oxidoreductase subunit O">
    <location>
        <begin position="1"/>
        <end position="81"/>
    </location>
</feature>
<gene>
    <name evidence="1" type="primary">ndhO</name>
    <name type="ordered locus">PMT_1975</name>
</gene>
<sequence length="81" mass="8785">MAETSAPAKATAALKKGALVRVNRHAFSSSTEAAASDPSPPDYIFEGPGELLAVKEGYGQVRWRMPVPDVWLRIDQLEPFS</sequence>
<proteinExistence type="inferred from homology"/>
<evidence type="ECO:0000255" key="1">
    <source>
        <dbReference type="HAMAP-Rule" id="MF_01354"/>
    </source>
</evidence>
<protein>
    <recommendedName>
        <fullName evidence="1">NAD(P)H-quinone oxidoreductase subunit O</fullName>
        <ecNumber evidence="1">7.1.1.-</ecNumber>
    </recommendedName>
    <alternativeName>
        <fullName evidence="1">NAD(P)H dehydrogenase I subunit O</fullName>
    </alternativeName>
    <alternativeName>
        <fullName>NDH-1 subunit O</fullName>
    </alternativeName>
    <alternativeName>
        <fullName>NDH-O</fullName>
    </alternativeName>
</protein>
<keyword id="KW-0472">Membrane</keyword>
<keyword id="KW-0520">NAD</keyword>
<keyword id="KW-0521">NADP</keyword>
<keyword id="KW-0618">Plastoquinone</keyword>
<keyword id="KW-0874">Quinone</keyword>
<keyword id="KW-1185">Reference proteome</keyword>
<keyword id="KW-0793">Thylakoid</keyword>
<keyword id="KW-1278">Translocase</keyword>
<keyword id="KW-0813">Transport</keyword>
<comment type="function">
    <text evidence="1">NDH-1 shuttles electrons from an unknown electron donor, via FMN and iron-sulfur (Fe-S) centers, to quinones in the respiratory and/or the photosynthetic chain. The immediate electron acceptor for the enzyme in this species is believed to be plastoquinone. Couples the redox reaction to proton translocation, and thus conserves the redox energy in a proton gradient. Cyanobacterial NDH-1 also plays a role in inorganic carbon-concentration.</text>
</comment>
<comment type="catalytic activity">
    <reaction evidence="1">
        <text>a plastoquinone + NADH + (n+1) H(+)(in) = a plastoquinol + NAD(+) + n H(+)(out)</text>
        <dbReference type="Rhea" id="RHEA:42608"/>
        <dbReference type="Rhea" id="RHEA-COMP:9561"/>
        <dbReference type="Rhea" id="RHEA-COMP:9562"/>
        <dbReference type="ChEBI" id="CHEBI:15378"/>
        <dbReference type="ChEBI" id="CHEBI:17757"/>
        <dbReference type="ChEBI" id="CHEBI:57540"/>
        <dbReference type="ChEBI" id="CHEBI:57945"/>
        <dbReference type="ChEBI" id="CHEBI:62192"/>
    </reaction>
</comment>
<comment type="catalytic activity">
    <reaction evidence="1">
        <text>a plastoquinone + NADPH + (n+1) H(+)(in) = a plastoquinol + NADP(+) + n H(+)(out)</text>
        <dbReference type="Rhea" id="RHEA:42612"/>
        <dbReference type="Rhea" id="RHEA-COMP:9561"/>
        <dbReference type="Rhea" id="RHEA-COMP:9562"/>
        <dbReference type="ChEBI" id="CHEBI:15378"/>
        <dbReference type="ChEBI" id="CHEBI:17757"/>
        <dbReference type="ChEBI" id="CHEBI:57783"/>
        <dbReference type="ChEBI" id="CHEBI:58349"/>
        <dbReference type="ChEBI" id="CHEBI:62192"/>
    </reaction>
</comment>
<comment type="subunit">
    <text evidence="1">NDH-1 can be composed of about 15 different subunits; different subcomplexes with different compositions have been identified which probably have different functions.</text>
</comment>
<comment type="subcellular location">
    <subcellularLocation>
        <location evidence="1">Cellular thylakoid membrane</location>
        <topology evidence="1">Peripheral membrane protein</topology>
        <orientation evidence="1">Cytoplasmic side</orientation>
    </subcellularLocation>
</comment>
<comment type="similarity">
    <text evidence="1">Belongs to the complex I NdhO subunit family.</text>
</comment>